<sequence>MLSAGLGLLMLVAVIEFLIGLIGNGILVVWSLREWIRKFSWSSYNLIILGLAGCRFLLQWLIILDLSLFPLFQSSSWLRYLNVFWVLVSQASLWFATFLSVFYCKKITTFDRPAYLWLKQRAYNLSLWCLLGYFIISLLLTVQVGLTVHHPPQGNSSIRYPFEHWQYLYVFQLNSGSYLPLMVFLVSSGMLIISLYTHHKKMKVHSAGRRDARAKAHITALKSLGCFLLLHLVYIVASPFSITSKTYPPDLTSVFIWETLMAAYPSLHSLMLIMGIPRVKQTCQKILWKTVCARRCWGP</sequence>
<organism>
    <name type="scientific">Papio hamadryas</name>
    <name type="common">Hamadryas baboon</name>
    <dbReference type="NCBI Taxonomy" id="9557"/>
    <lineage>
        <taxon>Eukaryota</taxon>
        <taxon>Metazoa</taxon>
        <taxon>Chordata</taxon>
        <taxon>Craniata</taxon>
        <taxon>Vertebrata</taxon>
        <taxon>Euteleostomi</taxon>
        <taxon>Mammalia</taxon>
        <taxon>Eutheria</taxon>
        <taxon>Euarchontoglires</taxon>
        <taxon>Primates</taxon>
        <taxon>Haplorrhini</taxon>
        <taxon>Catarrhini</taxon>
        <taxon>Cercopithecidae</taxon>
        <taxon>Cercopithecinae</taxon>
        <taxon>Papio</taxon>
    </lineage>
</organism>
<reference key="1">
    <citation type="journal article" date="2005" name="Mol. Biol. Evol.">
        <title>Evolution of bitter taste receptors in humans and apes.</title>
        <authorList>
            <person name="Fischer A."/>
            <person name="Gilad Y."/>
            <person name="Man O."/>
            <person name="Paeaebo S."/>
        </authorList>
    </citation>
    <scope>NUCLEOTIDE SEQUENCE [GENOMIC DNA]</scope>
</reference>
<feature type="chain" id="PRO_0000082215" description="Taste receptor type 2 member 5">
    <location>
        <begin position="1"/>
        <end position="299"/>
    </location>
</feature>
<feature type="topological domain" description="Extracellular" evidence="2">
    <location>
        <position position="1"/>
    </location>
</feature>
<feature type="transmembrane region" description="Helical; Name=1" evidence="2">
    <location>
        <begin position="2"/>
        <end position="22"/>
    </location>
</feature>
<feature type="topological domain" description="Cytoplasmic" evidence="2">
    <location>
        <begin position="23"/>
        <end position="45"/>
    </location>
</feature>
<feature type="transmembrane region" description="Helical; Name=2" evidence="2">
    <location>
        <begin position="46"/>
        <end position="66"/>
    </location>
</feature>
<feature type="topological domain" description="Extracellular" evidence="2">
    <location>
        <begin position="67"/>
        <end position="82"/>
    </location>
</feature>
<feature type="transmembrane region" description="Helical; Name=3" evidence="2">
    <location>
        <begin position="83"/>
        <end position="103"/>
    </location>
</feature>
<feature type="topological domain" description="Cytoplasmic" evidence="2">
    <location>
        <begin position="104"/>
        <end position="127"/>
    </location>
</feature>
<feature type="transmembrane region" description="Helical; Name=4" evidence="2">
    <location>
        <begin position="128"/>
        <end position="148"/>
    </location>
</feature>
<feature type="topological domain" description="Extracellular" evidence="2">
    <location>
        <begin position="149"/>
        <end position="175"/>
    </location>
</feature>
<feature type="transmembrane region" description="Helical; Name=5" evidence="2">
    <location>
        <begin position="176"/>
        <end position="196"/>
    </location>
</feature>
<feature type="topological domain" description="Cytoplasmic" evidence="2">
    <location>
        <begin position="197"/>
        <end position="223"/>
    </location>
</feature>
<feature type="transmembrane region" description="Helical; Name=6" evidence="2">
    <location>
        <begin position="224"/>
        <end position="244"/>
    </location>
</feature>
<feature type="topological domain" description="Extracellular" evidence="2">
    <location>
        <begin position="245"/>
        <end position="253"/>
    </location>
</feature>
<feature type="transmembrane region" description="Helical; Name=7" evidence="2">
    <location>
        <begin position="254"/>
        <end position="274"/>
    </location>
</feature>
<feature type="topological domain" description="Cytoplasmic" evidence="2">
    <location>
        <begin position="275"/>
        <end position="299"/>
    </location>
</feature>
<feature type="glycosylation site" description="N-linked (GlcNAc...) asparagine" evidence="2">
    <location>
        <position position="155"/>
    </location>
</feature>
<accession>Q646E6</accession>
<comment type="function">
    <text evidence="1">Receptor that may play a role in the perception of bitterness and is gustducin-linked. May play a role in sensing the chemical composition of the gastrointestinal content. The activity of this receptor may stimulate alpha gustducin, mediate PLC-beta-2 activation and lead to the gating of TRPM5 (By similarity).</text>
</comment>
<comment type="subcellular location">
    <subcellularLocation>
        <location>Membrane</location>
        <topology>Multi-pass membrane protein</topology>
    </subcellularLocation>
</comment>
<comment type="miscellaneous">
    <text>Most taste cells may be activated by a limited number of bitter compounds; individual taste cells can discriminate among bitter stimuli.</text>
</comment>
<comment type="similarity">
    <text evidence="3">Belongs to the G-protein coupled receptor T2R family.</text>
</comment>
<gene>
    <name type="primary">TAS2R5</name>
</gene>
<proteinExistence type="inferred from homology"/>
<protein>
    <recommendedName>
        <fullName>Taste receptor type 2 member 5</fullName>
        <shortName>T2R5</shortName>
    </recommendedName>
</protein>
<dbReference type="EMBL" id="AY724839">
    <property type="protein sequence ID" value="AAU21073.1"/>
    <property type="molecule type" value="Genomic_DNA"/>
</dbReference>
<dbReference type="SMR" id="Q646E6"/>
<dbReference type="GlyCosmos" id="Q646E6">
    <property type="glycosylation" value="1 site, No reported glycans"/>
</dbReference>
<dbReference type="GO" id="GO:0005886">
    <property type="term" value="C:plasma membrane"/>
    <property type="evidence" value="ECO:0007669"/>
    <property type="project" value="UniProtKB-ARBA"/>
</dbReference>
<dbReference type="GO" id="GO:0033038">
    <property type="term" value="F:bitter taste receptor activity"/>
    <property type="evidence" value="ECO:0007669"/>
    <property type="project" value="InterPro"/>
</dbReference>
<dbReference type="GO" id="GO:0004930">
    <property type="term" value="F:G protein-coupled receptor activity"/>
    <property type="evidence" value="ECO:0007669"/>
    <property type="project" value="UniProtKB-KW"/>
</dbReference>
<dbReference type="CDD" id="cd13950">
    <property type="entry name" value="7tm_TAS2R"/>
    <property type="match status" value="1"/>
</dbReference>
<dbReference type="FunFam" id="1.20.1070.10:FF:000055">
    <property type="entry name" value="Taste receptor type 2"/>
    <property type="match status" value="1"/>
</dbReference>
<dbReference type="Gene3D" id="1.20.1070.10">
    <property type="entry name" value="Rhodopsin 7-helix transmembrane proteins"/>
    <property type="match status" value="1"/>
</dbReference>
<dbReference type="InterPro" id="IPR007960">
    <property type="entry name" value="TAS2R"/>
</dbReference>
<dbReference type="PANTHER" id="PTHR11394">
    <property type="entry name" value="TASTE RECEPTOR TYPE 2"/>
    <property type="match status" value="1"/>
</dbReference>
<dbReference type="PANTHER" id="PTHR11394:SF8">
    <property type="entry name" value="TASTE RECEPTOR TYPE 2 MEMBER 5"/>
    <property type="match status" value="1"/>
</dbReference>
<dbReference type="Pfam" id="PF05296">
    <property type="entry name" value="TAS2R"/>
    <property type="match status" value="1"/>
</dbReference>
<dbReference type="SUPFAM" id="SSF81321">
    <property type="entry name" value="Family A G protein-coupled receptor-like"/>
    <property type="match status" value="1"/>
</dbReference>
<name>TA2R5_PAPHA</name>
<keyword id="KW-0297">G-protein coupled receptor</keyword>
<keyword id="KW-0325">Glycoprotein</keyword>
<keyword id="KW-0472">Membrane</keyword>
<keyword id="KW-0675">Receptor</keyword>
<keyword id="KW-0716">Sensory transduction</keyword>
<keyword id="KW-0919">Taste</keyword>
<keyword id="KW-0807">Transducer</keyword>
<keyword id="KW-0812">Transmembrane</keyword>
<keyword id="KW-1133">Transmembrane helix</keyword>
<evidence type="ECO:0000250" key="1"/>
<evidence type="ECO:0000255" key="2"/>
<evidence type="ECO:0000305" key="3"/>